<keyword id="KW-0106">Calcium</keyword>
<keyword id="KW-0130">Cell adhesion</keyword>
<keyword id="KW-1003">Cell membrane</keyword>
<keyword id="KW-1015">Disulfide bond</keyword>
<keyword id="KW-0245">EGF-like domain</keyword>
<keyword id="KW-0325">Glycoprotein</keyword>
<keyword id="KW-0401">Integrin</keyword>
<keyword id="KW-0460">Magnesium</keyword>
<keyword id="KW-0472">Membrane</keyword>
<keyword id="KW-0479">Metal-binding</keyword>
<keyword id="KW-0581">Phagocytosis</keyword>
<keyword id="KW-0597">Phosphoprotein</keyword>
<keyword id="KW-0873">Pyrrolidone carboxylic acid</keyword>
<keyword id="KW-0675">Receptor</keyword>
<keyword id="KW-1185">Reference proteome</keyword>
<keyword id="KW-0677">Repeat</keyword>
<keyword id="KW-0732">Signal</keyword>
<keyword id="KW-0812">Transmembrane</keyword>
<keyword id="KW-1133">Transmembrane helix</keyword>
<proteinExistence type="evidence at transcript level"/>
<protein>
    <recommendedName>
        <fullName>Integrin beta-2</fullName>
    </recommendedName>
    <alternativeName>
        <fullName>Cell surface adhesion glycoproteins LFA-1/CR3/p150,95 subunit beta</fullName>
    </alternativeName>
    <alternativeName>
        <fullName>Complement receptor C3 subunit beta</fullName>
    </alternativeName>
    <cdAntigenName>CD18</cdAntigenName>
</protein>
<feature type="signal peptide" evidence="1">
    <location>
        <begin position="1"/>
        <end position="22"/>
    </location>
</feature>
<feature type="chain" id="PRO_0000016343" description="Integrin beta-2">
    <location>
        <begin position="23"/>
        <end position="769"/>
    </location>
</feature>
<feature type="topological domain" description="Extracellular" evidence="4">
    <location>
        <begin position="23"/>
        <end position="700"/>
    </location>
</feature>
<feature type="transmembrane region" description="Helical" evidence="4">
    <location>
        <begin position="701"/>
        <end position="723"/>
    </location>
</feature>
<feature type="topological domain" description="Cytoplasmic" evidence="4">
    <location>
        <begin position="724"/>
        <end position="769"/>
    </location>
</feature>
<feature type="domain" description="PSI" evidence="4">
    <location>
        <begin position="24"/>
        <end position="74"/>
    </location>
</feature>
<feature type="domain" description="VWFA" evidence="2">
    <location>
        <begin position="124"/>
        <end position="363"/>
    </location>
</feature>
<feature type="domain" description="I-EGF 1" evidence="5">
    <location>
        <begin position="449"/>
        <end position="482"/>
    </location>
</feature>
<feature type="domain" description="I-EGF 2" evidence="5">
    <location>
        <begin position="483"/>
        <end position="535"/>
    </location>
</feature>
<feature type="domain" description="I-EGF 3" evidence="5">
    <location>
        <begin position="536"/>
        <end position="574"/>
    </location>
</feature>
<feature type="domain" description="I-EGF 4" evidence="5">
    <location>
        <begin position="575"/>
        <end position="613"/>
    </location>
</feature>
<feature type="short sequence motif" description="Cell attachment site" evidence="4">
    <location>
        <begin position="397"/>
        <end position="399"/>
    </location>
</feature>
<feature type="binding site" description="in MIDAS binding site" evidence="3">
    <location>
        <position position="136"/>
    </location>
    <ligand>
        <name>Mg(2+)</name>
        <dbReference type="ChEBI" id="CHEBI:18420"/>
    </ligand>
</feature>
<feature type="binding site" description="in ADMIDAS binding site" evidence="3">
    <location>
        <position position="138"/>
    </location>
    <ligand>
        <name>Ca(2+)</name>
        <dbReference type="ChEBI" id="CHEBI:29108"/>
        <label>1</label>
    </ligand>
</feature>
<feature type="binding site" description="in MIDAS binding site" evidence="3">
    <location>
        <position position="138"/>
    </location>
    <ligand>
        <name>Mg(2+)</name>
        <dbReference type="ChEBI" id="CHEBI:18420"/>
    </ligand>
</feature>
<feature type="binding site" description="in ADMIDAS binding site" evidence="3">
    <location>
        <position position="141"/>
    </location>
    <ligand>
        <name>Ca(2+)</name>
        <dbReference type="ChEBI" id="CHEBI:29108"/>
        <label>1</label>
    </ligand>
</feature>
<feature type="binding site" description="in ADMIDAS binding site" evidence="3">
    <location>
        <position position="142"/>
    </location>
    <ligand>
        <name>Ca(2+)</name>
        <dbReference type="ChEBI" id="CHEBI:29108"/>
        <label>1</label>
    </ligand>
</feature>
<feature type="binding site" description="in LIMBS binding site" evidence="3">
    <location>
        <position position="173"/>
    </location>
    <ligand>
        <name>Ca(2+)</name>
        <dbReference type="ChEBI" id="CHEBI:29108"/>
        <label>2</label>
    </ligand>
</feature>
<feature type="binding site" description="in LIMBS binding site" evidence="3">
    <location>
        <position position="229"/>
    </location>
    <ligand>
        <name>Ca(2+)</name>
        <dbReference type="ChEBI" id="CHEBI:29108"/>
        <label>2</label>
    </ligand>
</feature>
<feature type="binding site" description="in LIMBS binding site" evidence="3">
    <location>
        <position position="231"/>
    </location>
    <ligand>
        <name>Ca(2+)</name>
        <dbReference type="ChEBI" id="CHEBI:29108"/>
        <label>2</label>
    </ligand>
</feature>
<feature type="binding site" description="in LIMBS binding site" evidence="3">
    <location>
        <position position="233"/>
    </location>
    <ligand>
        <name>Ca(2+)</name>
        <dbReference type="ChEBI" id="CHEBI:29108"/>
        <label>2</label>
    </ligand>
</feature>
<feature type="binding site" description="in LIMBS binding site" evidence="3">
    <location>
        <position position="234"/>
    </location>
    <ligand>
        <name>Ca(2+)</name>
        <dbReference type="ChEBI" id="CHEBI:29108"/>
        <label>2</label>
    </ligand>
</feature>
<feature type="binding site" description="in MIDAS binding site" evidence="3">
    <location>
        <position position="234"/>
    </location>
    <ligand>
        <name>Mg(2+)</name>
        <dbReference type="ChEBI" id="CHEBI:18420"/>
    </ligand>
</feature>
<feature type="binding site" description="in ADMIDAS binding site and liganded-open conformation" evidence="3">
    <location>
        <position position="264"/>
    </location>
    <ligand>
        <name>Ca(2+)</name>
        <dbReference type="ChEBI" id="CHEBI:29108"/>
        <label>1</label>
    </ligand>
</feature>
<feature type="binding site" description="in ADMIDAS binding site and unliganded-closed conformation" evidence="3">
    <location>
        <position position="347"/>
    </location>
    <ligand>
        <name>Ca(2+)</name>
        <dbReference type="ChEBI" id="CHEBI:29108"/>
        <label>1</label>
    </ligand>
</feature>
<feature type="modified residue" description="Pyrrolidone carboxylic acid" evidence="3">
    <location>
        <position position="23"/>
    </location>
</feature>
<feature type="modified residue" description="Phosphoserine" evidence="3">
    <location>
        <position position="745"/>
    </location>
</feature>
<feature type="modified residue" description="Phosphoserine" evidence="3">
    <location>
        <position position="756"/>
    </location>
</feature>
<feature type="modified residue" description="Phosphothreonine" evidence="3">
    <location>
        <position position="758"/>
    </location>
</feature>
<feature type="modified residue" description="Phosphothreonine" evidence="3">
    <location>
        <position position="760"/>
    </location>
</feature>
<feature type="glycosylation site" description="N-linked (GlcNAc...) asparagine" evidence="4">
    <location>
        <position position="50"/>
    </location>
</feature>
<feature type="glycosylation site" description="N-linked (GlcNAc...) asparagine" evidence="4">
    <location>
        <position position="116"/>
    </location>
</feature>
<feature type="glycosylation site" description="N-linked (GlcNAc...) asparagine" evidence="4">
    <location>
        <position position="254"/>
    </location>
</feature>
<feature type="glycosylation site" description="N-linked (GlcNAc...) asparagine" evidence="4">
    <location>
        <position position="501"/>
    </location>
</feature>
<feature type="glycosylation site" description="N-linked (GlcNAc...) asparagine" evidence="4">
    <location>
        <position position="642"/>
    </location>
</feature>
<feature type="disulfide bond" evidence="3">
    <location>
        <begin position="25"/>
        <end position="43"/>
    </location>
</feature>
<feature type="disulfide bond" evidence="3">
    <location>
        <begin position="33"/>
        <end position="447"/>
    </location>
</feature>
<feature type="disulfide bond" evidence="3">
    <location>
        <begin position="36"/>
        <end position="62"/>
    </location>
</feature>
<feature type="disulfide bond" evidence="3">
    <location>
        <begin position="46"/>
        <end position="73"/>
    </location>
</feature>
<feature type="disulfide bond" evidence="3">
    <location>
        <begin position="191"/>
        <end position="198"/>
    </location>
</feature>
<feature type="disulfide bond" evidence="3">
    <location>
        <begin position="246"/>
        <end position="286"/>
    </location>
</feature>
<feature type="disulfide bond" evidence="3">
    <location>
        <begin position="386"/>
        <end position="400"/>
    </location>
</feature>
<feature type="disulfide bond" evidence="3">
    <location>
        <begin position="420"/>
        <end position="445"/>
    </location>
</feature>
<feature type="disulfide bond" evidence="5">
    <location>
        <begin position="449"/>
        <end position="467"/>
    </location>
</feature>
<feature type="disulfide bond" evidence="5">
    <location>
        <begin position="459"/>
        <end position="470"/>
    </location>
</feature>
<feature type="disulfide bond" evidence="5">
    <location>
        <begin position="472"/>
        <end position="481"/>
    </location>
</feature>
<feature type="disulfide bond" evidence="5">
    <location>
        <begin position="483"/>
        <end position="514"/>
    </location>
</feature>
<feature type="disulfide bond" evidence="5">
    <location>
        <begin position="497"/>
        <end position="512"/>
    </location>
</feature>
<feature type="disulfide bond" evidence="5">
    <location>
        <begin position="506"/>
        <end position="517"/>
    </location>
</feature>
<feature type="disulfide bond" evidence="5">
    <location>
        <begin position="519"/>
        <end position="534"/>
    </location>
</feature>
<feature type="disulfide bond" evidence="5">
    <location>
        <begin position="536"/>
        <end position="559"/>
    </location>
</feature>
<feature type="disulfide bond" evidence="5">
    <location>
        <begin position="541"/>
        <end position="557"/>
    </location>
</feature>
<feature type="disulfide bond" evidence="5">
    <location>
        <begin position="549"/>
        <end position="562"/>
    </location>
</feature>
<feature type="disulfide bond" evidence="5">
    <location>
        <begin position="564"/>
        <end position="573"/>
    </location>
</feature>
<feature type="disulfide bond" evidence="5">
    <location>
        <begin position="575"/>
        <end position="598"/>
    </location>
</feature>
<feature type="disulfide bond" evidence="5">
    <location>
        <begin position="582"/>
        <end position="596"/>
    </location>
</feature>
<feature type="disulfide bond" evidence="5">
    <location>
        <begin position="590"/>
        <end position="601"/>
    </location>
</feature>
<feature type="disulfide bond" evidence="5">
    <location>
        <begin position="603"/>
        <end position="612"/>
    </location>
</feature>
<feature type="disulfide bond" evidence="3">
    <location>
        <begin position="615"/>
        <end position="618"/>
    </location>
</feature>
<feature type="disulfide bond" evidence="3">
    <location>
        <begin position="622"/>
        <end position="662"/>
    </location>
</feature>
<feature type="disulfide bond" evidence="3">
    <location>
        <begin position="628"/>
        <end position="647"/>
    </location>
</feature>
<feature type="disulfide bond" evidence="3">
    <location>
        <begin position="631"/>
        <end position="643"/>
    </location>
</feature>
<feature type="disulfide bond" evidence="3">
    <location>
        <begin position="670"/>
        <end position="695"/>
    </location>
</feature>
<accession>P53714</accession>
<organism>
    <name type="scientific">Sus scrofa</name>
    <name type="common">Pig</name>
    <dbReference type="NCBI Taxonomy" id="9823"/>
    <lineage>
        <taxon>Eukaryota</taxon>
        <taxon>Metazoa</taxon>
        <taxon>Chordata</taxon>
        <taxon>Craniata</taxon>
        <taxon>Vertebrata</taxon>
        <taxon>Euteleostomi</taxon>
        <taxon>Mammalia</taxon>
        <taxon>Eutheria</taxon>
        <taxon>Laurasiatheria</taxon>
        <taxon>Artiodactyla</taxon>
        <taxon>Suina</taxon>
        <taxon>Suidae</taxon>
        <taxon>Sus</taxon>
    </lineage>
</organism>
<sequence>MLCRCSPLLLLVGLLTLRSALSQECAKYKVSTCRDCIESGPGCAWCQKLNFSGQGEPDSVRCDTREQLLAKGCVADDIVDPRSLAETQEDQAGGQKQLSPQKVTLYLRPGQAATFNVTFRRAKGYPIDLYYLMDLSYSMLDDLINVKKLGGDLLRALNEITESGRIGFGSFVDKTVLPFVNTHPEKLRNPCPNKEKECQAPFAFRHVLKLTDNSNQFQTEVGKQLISGNLDAPEGGLDAMMQVAACPEEIGWRNVTRLLVFATDDGFHFAGDGKLGAILTPNDGRCHLEDNLYKSSNEFDYPSVGQLAHKLAESNIQPIFAVTKKMVKTYEKLTDIIPKSAVGELSEDSSNVLELIKNAYNKLSSRVFLDHNALPDTLKVTYDSFCSNGVSQVNQPRGDCDGVQINVPITFQVKVTASECIQEQSFVIRALGFTDTVTVRVLPQCECRCGDSSKERTLCGNKGSMECGVCRCDAGYIGKHCECQTQGRSSQELEGSCRKDNSSIICSGLGDCICGQCVCHTSDVPNKKIYGQFCECDNMNCERFDGQVCGGEKRGLCFCSTCRCQEGFEGSACQCLKSTQGCLNLQGVECSGRGRCRCNVCQCDFGYQPPLCTDCPSCQVPCARYAKCAECLKFDTGPFAKNCSAECGTTKLLPSRMSGRKCNERDSEGCWMTYFLVQRDGRDNYDLHVEETRECVKGPNIAAIVGGTVGGVVLVGIFLLVIWKVLTHLSDLREYKRFEKEKLKSQWNNDNPLFKSATTTVMNPKFAER</sequence>
<evidence type="ECO:0000250" key="1"/>
<evidence type="ECO:0000250" key="2">
    <source>
        <dbReference type="UniProtKB" id="P05106"/>
    </source>
</evidence>
<evidence type="ECO:0000250" key="3">
    <source>
        <dbReference type="UniProtKB" id="P05107"/>
    </source>
</evidence>
<evidence type="ECO:0000255" key="4"/>
<evidence type="ECO:0000255" key="5">
    <source>
        <dbReference type="PROSITE-ProRule" id="PRU01392"/>
    </source>
</evidence>
<evidence type="ECO:0000305" key="6"/>
<name>ITB2_PIG</name>
<dbReference type="EMBL" id="U13941">
    <property type="protein sequence ID" value="AAB16868.1"/>
    <property type="molecule type" value="mRNA"/>
</dbReference>
<dbReference type="RefSeq" id="NP_999073.1">
    <property type="nucleotide sequence ID" value="NM_213908.1"/>
</dbReference>
<dbReference type="SMR" id="P53714"/>
<dbReference type="FunCoup" id="P53714">
    <property type="interactions" value="620"/>
</dbReference>
<dbReference type="STRING" id="9823.ENSSSCP00000044320"/>
<dbReference type="GlyCosmos" id="P53714">
    <property type="glycosylation" value="5 sites, No reported glycans"/>
</dbReference>
<dbReference type="GlyGen" id="P53714">
    <property type="glycosylation" value="5 sites"/>
</dbReference>
<dbReference type="iPTMnet" id="P53714"/>
<dbReference type="PaxDb" id="9823-ENSSSCP00000028146"/>
<dbReference type="PeptideAtlas" id="P53714"/>
<dbReference type="GeneID" id="396943"/>
<dbReference type="KEGG" id="ssc:396943"/>
<dbReference type="CTD" id="3689"/>
<dbReference type="eggNOG" id="KOG1226">
    <property type="taxonomic scope" value="Eukaryota"/>
</dbReference>
<dbReference type="InParanoid" id="P53714"/>
<dbReference type="OrthoDB" id="410592at2759"/>
<dbReference type="Proteomes" id="UP000008227">
    <property type="component" value="Unplaced"/>
</dbReference>
<dbReference type="Proteomes" id="UP000314985">
    <property type="component" value="Unplaced"/>
</dbReference>
<dbReference type="Proteomes" id="UP000694570">
    <property type="component" value="Unplaced"/>
</dbReference>
<dbReference type="Proteomes" id="UP000694571">
    <property type="component" value="Unplaced"/>
</dbReference>
<dbReference type="Proteomes" id="UP000694720">
    <property type="component" value="Unplaced"/>
</dbReference>
<dbReference type="Proteomes" id="UP000694722">
    <property type="component" value="Unplaced"/>
</dbReference>
<dbReference type="Proteomes" id="UP000694723">
    <property type="component" value="Unplaced"/>
</dbReference>
<dbReference type="Proteomes" id="UP000694724">
    <property type="component" value="Unplaced"/>
</dbReference>
<dbReference type="Proteomes" id="UP000694725">
    <property type="component" value="Unplaced"/>
</dbReference>
<dbReference type="Proteomes" id="UP000694726">
    <property type="component" value="Unplaced"/>
</dbReference>
<dbReference type="Proteomes" id="UP000694727">
    <property type="component" value="Unplaced"/>
</dbReference>
<dbReference type="Proteomes" id="UP000694728">
    <property type="component" value="Unplaced"/>
</dbReference>
<dbReference type="GO" id="GO:0009986">
    <property type="term" value="C:cell surface"/>
    <property type="evidence" value="ECO:0000318"/>
    <property type="project" value="GO_Central"/>
</dbReference>
<dbReference type="GO" id="GO:0005925">
    <property type="term" value="C:focal adhesion"/>
    <property type="evidence" value="ECO:0000318"/>
    <property type="project" value="GO_Central"/>
</dbReference>
<dbReference type="GO" id="GO:0008305">
    <property type="term" value="C:integrin complex"/>
    <property type="evidence" value="ECO:0000318"/>
    <property type="project" value="GO_Central"/>
</dbReference>
<dbReference type="GO" id="GO:0016020">
    <property type="term" value="C:membrane"/>
    <property type="evidence" value="ECO:0000250"/>
    <property type="project" value="UniProtKB"/>
</dbReference>
<dbReference type="GO" id="GO:0045121">
    <property type="term" value="C:membrane raft"/>
    <property type="evidence" value="ECO:0007669"/>
    <property type="project" value="UniProtKB-SubCell"/>
</dbReference>
<dbReference type="GO" id="GO:0001540">
    <property type="term" value="F:amyloid-beta binding"/>
    <property type="evidence" value="ECO:0000318"/>
    <property type="project" value="GO_Central"/>
</dbReference>
<dbReference type="GO" id="GO:0005178">
    <property type="term" value="F:integrin binding"/>
    <property type="evidence" value="ECO:0000318"/>
    <property type="project" value="GO_Central"/>
</dbReference>
<dbReference type="GO" id="GO:0046872">
    <property type="term" value="F:metal ion binding"/>
    <property type="evidence" value="ECO:0007669"/>
    <property type="project" value="UniProtKB-KW"/>
</dbReference>
<dbReference type="GO" id="GO:0019901">
    <property type="term" value="F:protein kinase binding"/>
    <property type="evidence" value="ECO:0000318"/>
    <property type="project" value="GO_Central"/>
</dbReference>
<dbReference type="GO" id="GO:0033627">
    <property type="term" value="P:cell adhesion mediated by integrin"/>
    <property type="evidence" value="ECO:0000318"/>
    <property type="project" value="GO_Central"/>
</dbReference>
<dbReference type="GO" id="GO:0007160">
    <property type="term" value="P:cell-matrix adhesion"/>
    <property type="evidence" value="ECO:0000318"/>
    <property type="project" value="GO_Central"/>
</dbReference>
<dbReference type="GO" id="GO:0071404">
    <property type="term" value="P:cellular response to low-density lipoprotein particle stimulus"/>
    <property type="evidence" value="ECO:0000250"/>
    <property type="project" value="UniProtKB"/>
</dbReference>
<dbReference type="GO" id="GO:0007229">
    <property type="term" value="P:integrin-mediated signaling pathway"/>
    <property type="evidence" value="ECO:0000315"/>
    <property type="project" value="AgBase"/>
</dbReference>
<dbReference type="GO" id="GO:0007159">
    <property type="term" value="P:leukocyte cell-cell adhesion"/>
    <property type="evidence" value="ECO:0000318"/>
    <property type="project" value="GO_Central"/>
</dbReference>
<dbReference type="GO" id="GO:0030593">
    <property type="term" value="P:neutrophil chemotaxis"/>
    <property type="evidence" value="ECO:0000318"/>
    <property type="project" value="GO_Central"/>
</dbReference>
<dbReference type="GO" id="GO:0006909">
    <property type="term" value="P:phagocytosis"/>
    <property type="evidence" value="ECO:0007669"/>
    <property type="project" value="UniProtKB-KW"/>
</dbReference>
<dbReference type="GO" id="GO:1904996">
    <property type="term" value="P:positive regulation of leukocyte adhesion to vascular endothelial cell"/>
    <property type="evidence" value="ECO:0000250"/>
    <property type="project" value="UniProtKB"/>
</dbReference>
<dbReference type="GO" id="GO:0050766">
    <property type="term" value="P:positive regulation of phagocytosis"/>
    <property type="evidence" value="ECO:0000315"/>
    <property type="project" value="AgBase"/>
</dbReference>
<dbReference type="GO" id="GO:0031623">
    <property type="term" value="P:receptor internalization"/>
    <property type="evidence" value="ECO:0000250"/>
    <property type="project" value="UniProtKB"/>
</dbReference>
<dbReference type="FunFam" id="1.20.5.100:FF:000008">
    <property type="entry name" value="Integrin beta"/>
    <property type="match status" value="1"/>
</dbReference>
<dbReference type="FunFam" id="2.10.25.10:FF:000076">
    <property type="entry name" value="Integrin beta"/>
    <property type="match status" value="1"/>
</dbReference>
<dbReference type="FunFam" id="2.10.25.10:FF:000098">
    <property type="entry name" value="Integrin beta"/>
    <property type="match status" value="1"/>
</dbReference>
<dbReference type="FunFam" id="2.10.25.10:FF:000442">
    <property type="entry name" value="Integrin beta"/>
    <property type="match status" value="1"/>
</dbReference>
<dbReference type="FunFam" id="2.60.40.1510:FF:000008">
    <property type="entry name" value="Integrin beta"/>
    <property type="match status" value="1"/>
</dbReference>
<dbReference type="FunFam" id="3.30.1680.10:FF:000012">
    <property type="entry name" value="Integrin beta"/>
    <property type="match status" value="1"/>
</dbReference>
<dbReference type="FunFam" id="3.40.50.410:FF:000002">
    <property type="entry name" value="Integrin beta"/>
    <property type="match status" value="1"/>
</dbReference>
<dbReference type="Gene3D" id="6.20.50.10">
    <property type="match status" value="1"/>
</dbReference>
<dbReference type="Gene3D" id="1.20.5.100">
    <property type="entry name" value="Cytochrome c1, transmembrane anchor, C-terminal"/>
    <property type="match status" value="1"/>
</dbReference>
<dbReference type="Gene3D" id="2.10.25.10">
    <property type="entry name" value="Laminin"/>
    <property type="match status" value="4"/>
</dbReference>
<dbReference type="Gene3D" id="3.30.1680.10">
    <property type="entry name" value="ligand-binding face of the semaphorins, domain 2"/>
    <property type="match status" value="1"/>
</dbReference>
<dbReference type="Gene3D" id="2.60.40.1510">
    <property type="entry name" value="ntegrin, alpha v. Chain A, domain 3"/>
    <property type="match status" value="1"/>
</dbReference>
<dbReference type="Gene3D" id="3.40.50.410">
    <property type="entry name" value="von Willebrand factor, type A domain"/>
    <property type="match status" value="1"/>
</dbReference>
<dbReference type="InterPro" id="IPR013111">
    <property type="entry name" value="EGF_extracell"/>
</dbReference>
<dbReference type="InterPro" id="IPR015439">
    <property type="entry name" value="Integrin_b-2_sf"/>
</dbReference>
<dbReference type="InterPro" id="IPR033760">
    <property type="entry name" value="Integrin_beta_N"/>
</dbReference>
<dbReference type="InterPro" id="IPR015812">
    <property type="entry name" value="Integrin_bsu"/>
</dbReference>
<dbReference type="InterPro" id="IPR014836">
    <property type="entry name" value="Integrin_bsu_cyt_dom"/>
</dbReference>
<dbReference type="InterPro" id="IPR012896">
    <property type="entry name" value="Integrin_bsu_tail"/>
</dbReference>
<dbReference type="InterPro" id="IPR036349">
    <property type="entry name" value="Integrin_bsu_tail_dom_sf"/>
</dbReference>
<dbReference type="InterPro" id="IPR002369">
    <property type="entry name" value="Integrin_bsu_VWA"/>
</dbReference>
<dbReference type="InterPro" id="IPR032695">
    <property type="entry name" value="Integrin_dom_sf"/>
</dbReference>
<dbReference type="InterPro" id="IPR016201">
    <property type="entry name" value="PSI"/>
</dbReference>
<dbReference type="InterPro" id="IPR036465">
    <property type="entry name" value="vWFA_dom_sf"/>
</dbReference>
<dbReference type="PANTHER" id="PTHR10082">
    <property type="entry name" value="INTEGRIN BETA SUBUNIT"/>
    <property type="match status" value="1"/>
</dbReference>
<dbReference type="PANTHER" id="PTHR10082:SF15">
    <property type="entry name" value="INTEGRIN BETA-2"/>
    <property type="match status" value="1"/>
</dbReference>
<dbReference type="Pfam" id="PF07974">
    <property type="entry name" value="EGF_2"/>
    <property type="match status" value="1"/>
</dbReference>
<dbReference type="Pfam" id="PF23105">
    <property type="entry name" value="EGF_integrin"/>
    <property type="match status" value="1"/>
</dbReference>
<dbReference type="Pfam" id="PF08725">
    <property type="entry name" value="Integrin_b_cyt"/>
    <property type="match status" value="1"/>
</dbReference>
<dbReference type="Pfam" id="PF07965">
    <property type="entry name" value="Integrin_B_tail"/>
    <property type="match status" value="1"/>
</dbReference>
<dbReference type="Pfam" id="PF00362">
    <property type="entry name" value="Integrin_beta"/>
    <property type="match status" value="1"/>
</dbReference>
<dbReference type="Pfam" id="PF17205">
    <property type="entry name" value="PSI_integrin"/>
    <property type="match status" value="1"/>
</dbReference>
<dbReference type="PIRSF" id="PIRSF002512">
    <property type="entry name" value="Integrin_B"/>
    <property type="match status" value="1"/>
</dbReference>
<dbReference type="PRINTS" id="PR01186">
    <property type="entry name" value="INTEGRINB"/>
</dbReference>
<dbReference type="SMART" id="SM00187">
    <property type="entry name" value="INB"/>
    <property type="match status" value="1"/>
</dbReference>
<dbReference type="SMART" id="SM01241">
    <property type="entry name" value="Integrin_b_cyt"/>
    <property type="match status" value="1"/>
</dbReference>
<dbReference type="SMART" id="SM01242">
    <property type="entry name" value="Integrin_B_tail"/>
    <property type="match status" value="1"/>
</dbReference>
<dbReference type="SMART" id="SM00423">
    <property type="entry name" value="PSI"/>
    <property type="match status" value="1"/>
</dbReference>
<dbReference type="SUPFAM" id="SSF57196">
    <property type="entry name" value="EGF/Laminin"/>
    <property type="match status" value="2"/>
</dbReference>
<dbReference type="SUPFAM" id="SSF69687">
    <property type="entry name" value="Integrin beta tail domain"/>
    <property type="match status" value="1"/>
</dbReference>
<dbReference type="SUPFAM" id="SSF69179">
    <property type="entry name" value="Integrin domains"/>
    <property type="match status" value="1"/>
</dbReference>
<dbReference type="SUPFAM" id="SSF103575">
    <property type="entry name" value="Plexin repeat"/>
    <property type="match status" value="1"/>
</dbReference>
<dbReference type="SUPFAM" id="SSF53300">
    <property type="entry name" value="vWA-like"/>
    <property type="match status" value="1"/>
</dbReference>
<dbReference type="PROSITE" id="PS00022">
    <property type="entry name" value="EGF_1"/>
    <property type="match status" value="2"/>
</dbReference>
<dbReference type="PROSITE" id="PS01186">
    <property type="entry name" value="EGF_2"/>
    <property type="match status" value="3"/>
</dbReference>
<dbReference type="PROSITE" id="PS00243">
    <property type="entry name" value="I_EGF_1"/>
    <property type="match status" value="3"/>
</dbReference>
<dbReference type="PROSITE" id="PS52047">
    <property type="entry name" value="I_EGF_2"/>
    <property type="match status" value="4"/>
</dbReference>
<comment type="function">
    <text evidence="3">Integrin ITGAL/ITGB2 is a receptor for ICAM1, ICAM2, ICAM3 and ICAM4. Integrin ITGAL/ITGB2 is also a receptor for the secreted form of ubiquitin-like protein ISG15; the interaction is mediated by ITGAL. Integrins ITGAM/ITGB2 and ITGAX/ITGB2 are receptors for the iC3b fragment of the third complement component and for fibrinogen. Integrin ITGAX/ITGB2 recognizes the sequence G-P-R in fibrinogen alpha-chain. Integrin ITGAM/ITGB2 recognizes P1 and P2 peptides of fibrinogen gamma chain. Integrin ITGAM/ITGB2 is also a receptor for factor X. Integrin ITGAD/ITGB2 is a receptor for ICAM3 and VCAM1. Contributes to natural killer cell cytotoxicity. Involved in leukocyte adhesion and transmigration of leukocytes including T-cells and neutrophils. Triggers neutrophil transmigration during lung injury through PTK2B/PYK2-mediated activation. Integrin alpha-L/beta-2 in association with ICAM3, contributes to apoptotic neutrophil phagocytosis by macrophages.</text>
</comment>
<comment type="subunit">
    <text evidence="3">Heterodimer of an alpha and a beta subunit. The ITGB2 beta subunit associates with the ITGAL, ITGAM, ITGAX or ITGAD alpha subunits. Found in a complex with CD177 and ITGAM/CD11b. Interacts with FGR. Interacts with COPS5 and RANBP9. Interacts with FLNA (via filamin repeats 4, 9, 12, 17, 19, 21, and 23). Interacts with THBD.</text>
</comment>
<comment type="subcellular location">
    <subcellularLocation>
        <location evidence="3">Cell membrane</location>
        <topology evidence="3">Single-pass type I membrane protein</topology>
    </subcellularLocation>
    <subcellularLocation>
        <location evidence="3">Membrane raft</location>
        <topology evidence="3">Single-pass type I membrane protein</topology>
    </subcellularLocation>
</comment>
<comment type="domain">
    <text evidence="3">The VWFA domain (or beta I domain) contains three cation-binding sites: the ligand-associated metal ion-binding site (LIMBS or SyMBS), the metal ion-dependent adhesion site (MIDAS), and the adjacent MIDAS site (ADMIDAS). This domain is also part of the ligand-binding site.</text>
</comment>
<comment type="PTM">
    <text evidence="3">Both Ser-745 and Ser-756 become phosphorylated when T-cells are exposed to phorbol esters. Phosphorylation on Thr-758 (but not on Ser-756) allows interaction with 14-3-3 proteins.</text>
</comment>
<comment type="similarity">
    <text evidence="6">Belongs to the integrin beta chain family.</text>
</comment>
<reference key="1">
    <citation type="journal article" date="1996" name="Xenotransplantation">
        <title>Molecular cloning and characterization of the porcine CD18 leukocyte adhesion molecule.</title>
        <authorList>
            <person name="Lee J.K."/>
            <person name="Schook L.B."/>
            <person name="Rutherford M.S."/>
        </authorList>
    </citation>
    <scope>NUCLEOTIDE SEQUENCE [MRNA]</scope>
</reference>
<gene>
    <name type="primary">ITGB2</name>
    <name type="synonym">CD18</name>
</gene>